<reference key="1">
    <citation type="journal article" date="2009" name="Environ. Microbiol.">
        <title>Contribution of mobile genetic elements to Desulfovibrio vulgaris genome plasticity.</title>
        <authorList>
            <person name="Walker C.B."/>
            <person name="Stolyar S."/>
            <person name="Chivian D."/>
            <person name="Pinel N."/>
            <person name="Gabster J.A."/>
            <person name="Dehal P.S."/>
            <person name="He Z."/>
            <person name="Yang Z.K."/>
            <person name="Yen H.C."/>
            <person name="Zhou J."/>
            <person name="Wall J.D."/>
            <person name="Hazen T.C."/>
            <person name="Arkin A.P."/>
            <person name="Stahl D.A."/>
        </authorList>
    </citation>
    <scope>NUCLEOTIDE SEQUENCE [LARGE SCALE GENOMIC DNA]</scope>
    <source>
        <strain>DP4</strain>
    </source>
</reference>
<feature type="chain" id="PRO_0000338815" description="Translation initiation factor IF-1 1">
    <location>
        <begin position="1"/>
        <end position="87"/>
    </location>
</feature>
<feature type="domain" description="S1-like" evidence="1">
    <location>
        <begin position="1"/>
        <end position="72"/>
    </location>
</feature>
<feature type="region of interest" description="Disordered" evidence="2">
    <location>
        <begin position="65"/>
        <end position="87"/>
    </location>
</feature>
<proteinExistence type="inferred from homology"/>
<organism>
    <name type="scientific">Nitratidesulfovibrio vulgaris (strain DP4)</name>
    <name type="common">Desulfovibrio vulgaris</name>
    <dbReference type="NCBI Taxonomy" id="391774"/>
    <lineage>
        <taxon>Bacteria</taxon>
        <taxon>Pseudomonadati</taxon>
        <taxon>Thermodesulfobacteriota</taxon>
        <taxon>Desulfovibrionia</taxon>
        <taxon>Desulfovibrionales</taxon>
        <taxon>Desulfovibrionaceae</taxon>
        <taxon>Nitratidesulfovibrio</taxon>
    </lineage>
</organism>
<evidence type="ECO:0000255" key="1">
    <source>
        <dbReference type="HAMAP-Rule" id="MF_00075"/>
    </source>
</evidence>
<evidence type="ECO:0000256" key="2">
    <source>
        <dbReference type="SAM" id="MobiDB-lite"/>
    </source>
</evidence>
<protein>
    <recommendedName>
        <fullName evidence="1">Translation initiation factor IF-1 1</fullName>
    </recommendedName>
</protein>
<dbReference type="EMBL" id="CP000527">
    <property type="protein sequence ID" value="ABM28043.1"/>
    <property type="molecule type" value="Genomic_DNA"/>
</dbReference>
<dbReference type="SMR" id="A1VC77"/>
<dbReference type="KEGG" id="dvl:Dvul_1023"/>
<dbReference type="HOGENOM" id="CLU_151267_1_0_7"/>
<dbReference type="Proteomes" id="UP000009173">
    <property type="component" value="Chromosome"/>
</dbReference>
<dbReference type="GO" id="GO:0005829">
    <property type="term" value="C:cytosol"/>
    <property type="evidence" value="ECO:0007669"/>
    <property type="project" value="TreeGrafter"/>
</dbReference>
<dbReference type="GO" id="GO:0043022">
    <property type="term" value="F:ribosome binding"/>
    <property type="evidence" value="ECO:0007669"/>
    <property type="project" value="UniProtKB-UniRule"/>
</dbReference>
<dbReference type="GO" id="GO:0019843">
    <property type="term" value="F:rRNA binding"/>
    <property type="evidence" value="ECO:0007669"/>
    <property type="project" value="UniProtKB-UniRule"/>
</dbReference>
<dbReference type="GO" id="GO:0003743">
    <property type="term" value="F:translation initiation factor activity"/>
    <property type="evidence" value="ECO:0007669"/>
    <property type="project" value="UniProtKB-UniRule"/>
</dbReference>
<dbReference type="CDD" id="cd04451">
    <property type="entry name" value="S1_IF1"/>
    <property type="match status" value="1"/>
</dbReference>
<dbReference type="FunFam" id="2.40.50.140:FF:000002">
    <property type="entry name" value="Translation initiation factor IF-1"/>
    <property type="match status" value="1"/>
</dbReference>
<dbReference type="Gene3D" id="2.40.50.140">
    <property type="entry name" value="Nucleic acid-binding proteins"/>
    <property type="match status" value="1"/>
</dbReference>
<dbReference type="HAMAP" id="MF_00075">
    <property type="entry name" value="IF_1"/>
    <property type="match status" value="1"/>
</dbReference>
<dbReference type="InterPro" id="IPR012340">
    <property type="entry name" value="NA-bd_OB-fold"/>
</dbReference>
<dbReference type="InterPro" id="IPR006196">
    <property type="entry name" value="RNA-binding_domain_S1_IF1"/>
</dbReference>
<dbReference type="InterPro" id="IPR004368">
    <property type="entry name" value="TIF_IF1"/>
</dbReference>
<dbReference type="NCBIfam" id="TIGR00008">
    <property type="entry name" value="infA"/>
    <property type="match status" value="1"/>
</dbReference>
<dbReference type="PANTHER" id="PTHR33370">
    <property type="entry name" value="TRANSLATION INITIATION FACTOR IF-1, CHLOROPLASTIC"/>
    <property type="match status" value="1"/>
</dbReference>
<dbReference type="PANTHER" id="PTHR33370:SF1">
    <property type="entry name" value="TRANSLATION INITIATION FACTOR IF-1, CHLOROPLASTIC"/>
    <property type="match status" value="1"/>
</dbReference>
<dbReference type="Pfam" id="PF01176">
    <property type="entry name" value="eIF-1a"/>
    <property type="match status" value="1"/>
</dbReference>
<dbReference type="SUPFAM" id="SSF50249">
    <property type="entry name" value="Nucleic acid-binding proteins"/>
    <property type="match status" value="1"/>
</dbReference>
<dbReference type="PROSITE" id="PS50832">
    <property type="entry name" value="S1_IF1_TYPE"/>
    <property type="match status" value="1"/>
</dbReference>
<name>IF11_NITV4</name>
<accession>A1VC77</accession>
<keyword id="KW-0963">Cytoplasm</keyword>
<keyword id="KW-0396">Initiation factor</keyword>
<keyword id="KW-0648">Protein biosynthesis</keyword>
<keyword id="KW-0694">RNA-binding</keyword>
<keyword id="KW-0699">rRNA-binding</keyword>
<gene>
    <name evidence="1" type="primary">infA1</name>
    <name type="ordered locus">Dvul_1023</name>
</gene>
<sequence>MAADDHIEMEGVVEEALPGTLFRVVLENGHEVLAHLCGKMRKFRIRVLPGDKVTVHISPYDLTKGRIARRTTTPSGGPRPARSGNRR</sequence>
<comment type="function">
    <text evidence="1">One of the essential components for the initiation of protein synthesis. Stabilizes the binding of IF-2 and IF-3 on the 30S subunit to which N-formylmethionyl-tRNA(fMet) subsequently binds. Helps modulate mRNA selection, yielding the 30S pre-initiation complex (PIC). Upon addition of the 50S ribosomal subunit IF-1, IF-2 and IF-3 are released leaving the mature 70S translation initiation complex.</text>
</comment>
<comment type="subunit">
    <text evidence="1">Component of the 30S ribosomal translation pre-initiation complex which assembles on the 30S ribosome in the order IF-2 and IF-3, IF-1 and N-formylmethionyl-tRNA(fMet); mRNA recruitment can occur at any time during PIC assembly.</text>
</comment>
<comment type="subcellular location">
    <subcellularLocation>
        <location evidence="1">Cytoplasm</location>
    </subcellularLocation>
</comment>
<comment type="similarity">
    <text evidence="1">Belongs to the IF-1 family.</text>
</comment>